<reference key="1">
    <citation type="journal article" date="2009" name="Appl. Environ. Microbiol.">
        <title>Complete genome sequence of the chemolithoautotrophic marine magnetotactic coccus strain MC-1.</title>
        <authorList>
            <person name="Schubbe S."/>
            <person name="Williams T.J."/>
            <person name="Xie G."/>
            <person name="Kiss H.E."/>
            <person name="Brettin T.S."/>
            <person name="Martinez D."/>
            <person name="Ross C.A."/>
            <person name="Schuler D."/>
            <person name="Cox B.L."/>
            <person name="Nealson K.H."/>
            <person name="Bazylinski D.A."/>
        </authorList>
    </citation>
    <scope>NUCLEOTIDE SEQUENCE [LARGE SCALE GENOMIC DNA]</scope>
    <source>
        <strain>ATCC BAA-1437 / JCM 17883 / MC-1</strain>
    </source>
</reference>
<dbReference type="EMBL" id="CP000471">
    <property type="protein sequence ID" value="ABK46139.1"/>
    <property type="molecule type" value="Genomic_DNA"/>
</dbReference>
<dbReference type="RefSeq" id="WP_011715192.1">
    <property type="nucleotide sequence ID" value="NC_008576.1"/>
</dbReference>
<dbReference type="SMR" id="A0LDU6"/>
<dbReference type="STRING" id="156889.Mmc1_3654"/>
<dbReference type="KEGG" id="mgm:Mmc1_3654"/>
<dbReference type="eggNOG" id="COG1872">
    <property type="taxonomic scope" value="Bacteria"/>
</dbReference>
<dbReference type="HOGENOM" id="CLU_130694_6_0_5"/>
<dbReference type="OrthoDB" id="9801972at2"/>
<dbReference type="Proteomes" id="UP000002586">
    <property type="component" value="Chromosome"/>
</dbReference>
<dbReference type="GO" id="GO:0005737">
    <property type="term" value="C:cytoplasm"/>
    <property type="evidence" value="ECO:0007669"/>
    <property type="project" value="TreeGrafter"/>
</dbReference>
<dbReference type="Gene3D" id="3.30.1200.10">
    <property type="entry name" value="YggU-like"/>
    <property type="match status" value="1"/>
</dbReference>
<dbReference type="HAMAP" id="MF_00634">
    <property type="entry name" value="UPF0235"/>
    <property type="match status" value="1"/>
</dbReference>
<dbReference type="InterPro" id="IPR003746">
    <property type="entry name" value="DUF167"/>
</dbReference>
<dbReference type="InterPro" id="IPR036591">
    <property type="entry name" value="YggU-like_sf"/>
</dbReference>
<dbReference type="NCBIfam" id="TIGR00251">
    <property type="entry name" value="DUF167 family protein"/>
    <property type="match status" value="1"/>
</dbReference>
<dbReference type="PANTHER" id="PTHR13420">
    <property type="entry name" value="UPF0235 PROTEIN C15ORF40"/>
    <property type="match status" value="1"/>
</dbReference>
<dbReference type="PANTHER" id="PTHR13420:SF7">
    <property type="entry name" value="UPF0235 PROTEIN C15ORF40"/>
    <property type="match status" value="1"/>
</dbReference>
<dbReference type="Pfam" id="PF02594">
    <property type="entry name" value="DUF167"/>
    <property type="match status" value="1"/>
</dbReference>
<dbReference type="SMART" id="SM01152">
    <property type="entry name" value="DUF167"/>
    <property type="match status" value="1"/>
</dbReference>
<dbReference type="SUPFAM" id="SSF69786">
    <property type="entry name" value="YggU-like"/>
    <property type="match status" value="1"/>
</dbReference>
<gene>
    <name type="ordered locus">Mmc1_3654</name>
</gene>
<protein>
    <recommendedName>
        <fullName evidence="1">UPF0235 protein Mmc1_3654</fullName>
    </recommendedName>
</protein>
<name>Y3654_MAGMM</name>
<comment type="similarity">
    <text evidence="1">Belongs to the UPF0235 family.</text>
</comment>
<organism>
    <name type="scientific">Magnetococcus marinus (strain ATCC BAA-1437 / JCM 17883 / MC-1)</name>
    <dbReference type="NCBI Taxonomy" id="156889"/>
    <lineage>
        <taxon>Bacteria</taxon>
        <taxon>Pseudomonadati</taxon>
        <taxon>Pseudomonadota</taxon>
        <taxon>Alphaproteobacteria</taxon>
        <taxon>Magnetococcales</taxon>
        <taxon>Magnetococcaceae</taxon>
        <taxon>Magnetococcus</taxon>
    </lineage>
</organism>
<keyword id="KW-1185">Reference proteome</keyword>
<sequence length="98" mass="10806">MGQPSWQGDTLHLTIRVQPKAAQERVMGWQGEQLKVALNAPPVDGAANKALCHFLAKQLGIAKGQVTLVRGEKSREKQLVIQGISPSIWQQFLERHGV</sequence>
<accession>A0LDU6</accession>
<proteinExistence type="inferred from homology"/>
<feature type="chain" id="PRO_1000061425" description="UPF0235 protein Mmc1_3654">
    <location>
        <begin position="1"/>
        <end position="98"/>
    </location>
</feature>
<evidence type="ECO:0000255" key="1">
    <source>
        <dbReference type="HAMAP-Rule" id="MF_00634"/>
    </source>
</evidence>